<accession>Q8CVU7</accession>
<proteinExistence type="inferred from homology"/>
<feature type="signal peptide" evidence="1">
    <location>
        <begin position="1"/>
        <end position="25"/>
    </location>
</feature>
<feature type="chain" id="PRO_0000025203" description="Long-chain fatty acid transport protein">
    <location>
        <begin position="26"/>
        <end position="446"/>
    </location>
</feature>
<name>FADL_ECOL6</name>
<keyword id="KW-0998">Cell outer membrane</keyword>
<keyword id="KW-0445">Lipid transport</keyword>
<keyword id="KW-0472">Membrane</keyword>
<keyword id="KW-1185">Reference proteome</keyword>
<keyword id="KW-0732">Signal</keyword>
<keyword id="KW-0812">Transmembrane</keyword>
<keyword id="KW-1134">Transmembrane beta strand</keyword>
<keyword id="KW-0813">Transport</keyword>
<protein>
    <recommendedName>
        <fullName>Long-chain fatty acid transport protein</fullName>
    </recommendedName>
    <alternativeName>
        <fullName>Outer membrane FadL protein</fullName>
    </alternativeName>
    <alternativeName>
        <fullName>Outer membrane flp protein</fullName>
    </alternativeName>
</protein>
<reference key="1">
    <citation type="journal article" date="2002" name="Proc. Natl. Acad. Sci. U.S.A.">
        <title>Extensive mosaic structure revealed by the complete genome sequence of uropathogenic Escherichia coli.</title>
        <authorList>
            <person name="Welch R.A."/>
            <person name="Burland V."/>
            <person name="Plunkett G. III"/>
            <person name="Redford P."/>
            <person name="Roesch P."/>
            <person name="Rasko D."/>
            <person name="Buckles E.L."/>
            <person name="Liou S.-R."/>
            <person name="Boutin A."/>
            <person name="Hackett J."/>
            <person name="Stroud D."/>
            <person name="Mayhew G.F."/>
            <person name="Rose D.J."/>
            <person name="Zhou S."/>
            <person name="Schwartz D.C."/>
            <person name="Perna N.T."/>
            <person name="Mobley H.L.T."/>
            <person name="Donnenberg M.S."/>
            <person name="Blattner F.R."/>
        </authorList>
    </citation>
    <scope>NUCLEOTIDE SEQUENCE [LARGE SCALE GENOMIC DNA]</scope>
    <source>
        <strain>CFT073 / ATCC 700928 / UPEC</strain>
    </source>
</reference>
<evidence type="ECO:0000250" key="1"/>
<evidence type="ECO:0000305" key="2"/>
<dbReference type="EMBL" id="AE014075">
    <property type="protein sequence ID" value="AAN81339.1"/>
    <property type="status" value="ALT_INIT"/>
    <property type="molecule type" value="Genomic_DNA"/>
</dbReference>
<dbReference type="RefSeq" id="WP_001350318.1">
    <property type="nucleotide sequence ID" value="NZ_CP051263.1"/>
</dbReference>
<dbReference type="SMR" id="Q8CVU7"/>
<dbReference type="STRING" id="199310.c2889"/>
<dbReference type="KEGG" id="ecc:c2889"/>
<dbReference type="eggNOG" id="COG2067">
    <property type="taxonomic scope" value="Bacteria"/>
</dbReference>
<dbReference type="HOGENOM" id="CLU_035981_0_0_6"/>
<dbReference type="Proteomes" id="UP000001410">
    <property type="component" value="Chromosome"/>
</dbReference>
<dbReference type="GO" id="GO:0009279">
    <property type="term" value="C:cell outer membrane"/>
    <property type="evidence" value="ECO:0007669"/>
    <property type="project" value="UniProtKB-SubCell"/>
</dbReference>
<dbReference type="GO" id="GO:0015483">
    <property type="term" value="F:long-chain fatty acid transporting porin activity"/>
    <property type="evidence" value="ECO:0007669"/>
    <property type="project" value="TreeGrafter"/>
</dbReference>
<dbReference type="FunFam" id="2.40.160.60:FF:000001">
    <property type="entry name" value="Long-chain fatty acid transporter FadL"/>
    <property type="match status" value="1"/>
</dbReference>
<dbReference type="Gene3D" id="2.40.160.60">
    <property type="entry name" value="Outer membrane protein transport protein (OMPP1/FadL/TodX)"/>
    <property type="match status" value="1"/>
</dbReference>
<dbReference type="InterPro" id="IPR005017">
    <property type="entry name" value="OMPP1/FadL/TodX"/>
</dbReference>
<dbReference type="NCBIfam" id="NF007988">
    <property type="entry name" value="PRK10716.1"/>
    <property type="match status" value="1"/>
</dbReference>
<dbReference type="PANTHER" id="PTHR35093:SF3">
    <property type="entry name" value="LONG-CHAIN FATTY ACID TRANSPORT PROTEIN"/>
    <property type="match status" value="1"/>
</dbReference>
<dbReference type="PANTHER" id="PTHR35093">
    <property type="entry name" value="OUTER MEMBRANE PROTEIN NMB0088-RELATED"/>
    <property type="match status" value="1"/>
</dbReference>
<dbReference type="Pfam" id="PF03349">
    <property type="entry name" value="Toluene_X"/>
    <property type="match status" value="1"/>
</dbReference>
<dbReference type="SUPFAM" id="SSF56935">
    <property type="entry name" value="Porins"/>
    <property type="match status" value="1"/>
</dbReference>
<organism>
    <name type="scientific">Escherichia coli O6:H1 (strain CFT073 / ATCC 700928 / UPEC)</name>
    <dbReference type="NCBI Taxonomy" id="199310"/>
    <lineage>
        <taxon>Bacteria</taxon>
        <taxon>Pseudomonadati</taxon>
        <taxon>Pseudomonadota</taxon>
        <taxon>Gammaproteobacteria</taxon>
        <taxon>Enterobacterales</taxon>
        <taxon>Enterobacteriaceae</taxon>
        <taxon>Escherichia</taxon>
    </lineage>
</organism>
<gene>
    <name type="primary">fadL</name>
    <name type="ordered locus">c2889</name>
</gene>
<comment type="function">
    <text evidence="1">Involved in translocation of long-chain fatty acids across the outer membrane. FadL may form a specific channel (By similarity).</text>
</comment>
<comment type="subcellular location">
    <subcellularLocation>
        <location evidence="1">Cell outer membrane</location>
        <topology evidence="1">Multi-pass membrane protein</topology>
    </subcellularLocation>
</comment>
<comment type="similarity">
    <text evidence="2">Belongs to the OmpP1/FadL family.</text>
</comment>
<comment type="sequence caution" evidence="2">
    <conflict type="erroneous initiation">
        <sequence resource="EMBL-CDS" id="AAN81339"/>
    </conflict>
</comment>
<sequence length="446" mass="48680">MSQKTLFTKSALAVAVALISTQAWSAGFQLNEFSSSGLGRAYSGEGAIADDAGNVSRNPALITMFDRPTFSAGAVYIDPDVDITGHSDLTGQSANAKNIAPTAWVPNLHFVAPINDQFGWGASITSNYGLATEFTDNYAAGIYGGKTDLQTINLNLSGAYRLNNSWSFGLGFDAVYAKAKIERYAGSLGPLLSQQLIAQGVPASLTNGINTPDSQIAHLKGDEWGFGWNAGILYELDKDNRWGLTYRSEVKIDFDGDYKSSINPNLNNILGNMGLPYGTMGATQNGSLTLNLPEMWEISGYNRVAPQWAIHYSMAYTSWSQFQELKAKGDSGQTLFYKDEGFRDAYRIALGTTYYYDKNWTFRTGIAYDDSPVPADKRSISIPDQDRLWLSAGLTYAFNEDASIDVGASYMHGQKVKFTEGEGAAAYSFESEGKAWLFGTNFNYAF</sequence>